<comment type="function">
    <text evidence="1">Component of the COP9 signalosome complex (CSN), a complex involved in various cellular and developmental processes. The CSN complex is an essential regulator of the ubiquitin (Ubl) conjugation pathway by mediating the deneddylation of the cullin subunits of SCF-type E3 ligase complexes, leading to decrease the Ubl ligase activity of SCF-type complexes such as SCF, CSA or DDB2. The complex is also involved in phosphorylation of p53/TP53, JUN, I-kappa-B-alpha/NFKBIA, ITPK1 and IRF8/ICSBP, possibly via its association with CK2 and PKD kinases. CSN-dependent phosphorylation of TP53 and JUN promotes and protects degradation by the Ubl system, respectively (By similarity).</text>
</comment>
<comment type="subunit">
    <text evidence="2 3">Component of the CSN complex, composed of COPS1/GPS1, COPS2, COPS3, COPS4, COPS5, COPS6, COPS7 (COPS7A or COPS7B), COPS8 and COPS9. In the complex, it probably interacts directly with COPS1, COPS2, COPS4, COPS5, COPS6 and COPS8. Interacts with PMF1. Interacts with the translation initiation factor EIF3S6. Interacts with CK2 and PKD. Interacts directly with ID3.</text>
</comment>
<comment type="subcellular location">
    <subcellularLocation>
        <location evidence="1">Cytoplasm</location>
    </subcellularLocation>
    <subcellularLocation>
        <location evidence="1">Nucleus</location>
    </subcellularLocation>
</comment>
<comment type="PTM">
    <text>Phosphorylated by CK2 and PKD kinases.</text>
</comment>
<comment type="similarity">
    <text evidence="7">Belongs to the CSN7/EIF3M family. CSN7 subfamily.</text>
</comment>
<gene>
    <name type="primary">COPS7A</name>
    <name type="synonym">CSN7A</name>
</gene>
<organism>
    <name type="scientific">Pongo abelii</name>
    <name type="common">Sumatran orangutan</name>
    <name type="synonym">Pongo pygmaeus abelii</name>
    <dbReference type="NCBI Taxonomy" id="9601"/>
    <lineage>
        <taxon>Eukaryota</taxon>
        <taxon>Metazoa</taxon>
        <taxon>Chordata</taxon>
        <taxon>Craniata</taxon>
        <taxon>Vertebrata</taxon>
        <taxon>Euteleostomi</taxon>
        <taxon>Mammalia</taxon>
        <taxon>Eutheria</taxon>
        <taxon>Euarchontoglires</taxon>
        <taxon>Primates</taxon>
        <taxon>Haplorrhini</taxon>
        <taxon>Catarrhini</taxon>
        <taxon>Hominidae</taxon>
        <taxon>Pongo</taxon>
    </lineage>
</organism>
<reference key="1">
    <citation type="submission" date="2004-11" db="EMBL/GenBank/DDBJ databases">
        <authorList>
            <consortium name="The German cDNA consortium"/>
        </authorList>
    </citation>
    <scope>NUCLEOTIDE SEQUENCE [LARGE SCALE MRNA]</scope>
    <source>
        <tissue>Brain cortex</tissue>
        <tissue>Heart</tissue>
    </source>
</reference>
<protein>
    <recommendedName>
        <fullName>COP9 signalosome complex subunit 7a</fullName>
        <shortName>SGN7a</shortName>
        <shortName>Signalosome subunit 7a</shortName>
    </recommendedName>
    <alternativeName>
        <fullName>JAB1-containing signalosome subunit 7a</fullName>
    </alternativeName>
</protein>
<accession>Q5R762</accession>
<feature type="initiator methionine" description="Removed" evidence="3">
    <location>
        <position position="1"/>
    </location>
</feature>
<feature type="chain" id="PRO_0000120998" description="COP9 signalosome complex subunit 7a">
    <location>
        <begin position="2"/>
        <end position="275"/>
    </location>
</feature>
<feature type="domain" description="PCI" evidence="5">
    <location>
        <begin position="2"/>
        <end position="159"/>
    </location>
</feature>
<feature type="region of interest" description="Disordered" evidence="6">
    <location>
        <begin position="227"/>
        <end position="275"/>
    </location>
</feature>
<feature type="coiled-coil region" evidence="4">
    <location>
        <begin position="185"/>
        <end position="233"/>
    </location>
</feature>
<feature type="compositionally biased region" description="Basic and acidic residues" evidence="6">
    <location>
        <begin position="235"/>
        <end position="244"/>
    </location>
</feature>
<feature type="compositionally biased region" description="Basic residues" evidence="6">
    <location>
        <begin position="254"/>
        <end position="263"/>
    </location>
</feature>
<feature type="modified residue" description="N-acetylserine" evidence="3">
    <location>
        <position position="2"/>
    </location>
</feature>
<keyword id="KW-0007">Acetylation</keyword>
<keyword id="KW-0175">Coiled coil</keyword>
<keyword id="KW-0963">Cytoplasm</keyword>
<keyword id="KW-0539">Nucleus</keyword>
<keyword id="KW-0597">Phosphoprotein</keyword>
<keyword id="KW-1185">Reference proteome</keyword>
<keyword id="KW-0736">Signalosome</keyword>
<dbReference type="EMBL" id="CR860256">
    <property type="protein sequence ID" value="CAH92398.1"/>
    <property type="molecule type" value="mRNA"/>
</dbReference>
<dbReference type="EMBL" id="CR859228">
    <property type="protein sequence ID" value="CAH91409.1"/>
    <property type="molecule type" value="mRNA"/>
</dbReference>
<dbReference type="RefSeq" id="NP_001126414.1">
    <property type="nucleotide sequence ID" value="NM_001132942.1"/>
</dbReference>
<dbReference type="SMR" id="Q5R762"/>
<dbReference type="FunCoup" id="Q5R762">
    <property type="interactions" value="3891"/>
</dbReference>
<dbReference type="STRING" id="9601.ENSPPYP00000004784"/>
<dbReference type="Ensembl" id="ENSPPYT00000004974.3">
    <property type="protein sequence ID" value="ENSPPYP00000004784.2"/>
    <property type="gene ID" value="ENSPPYG00000004198.3"/>
</dbReference>
<dbReference type="GeneID" id="100173397"/>
<dbReference type="KEGG" id="pon:100173397"/>
<dbReference type="CTD" id="50813"/>
<dbReference type="eggNOG" id="KOG3250">
    <property type="taxonomic scope" value="Eukaryota"/>
</dbReference>
<dbReference type="GeneTree" id="ENSGT00940000159873"/>
<dbReference type="HOGENOM" id="CLU_054426_1_0_1"/>
<dbReference type="InParanoid" id="Q5R762"/>
<dbReference type="OMA" id="SACEYRH"/>
<dbReference type="OrthoDB" id="10265275at2759"/>
<dbReference type="TreeFam" id="TF101149"/>
<dbReference type="Proteomes" id="UP000001595">
    <property type="component" value="Chromosome 12"/>
</dbReference>
<dbReference type="GO" id="GO:0008180">
    <property type="term" value="C:COP9 signalosome"/>
    <property type="evidence" value="ECO:0007669"/>
    <property type="project" value="UniProtKB-KW"/>
</dbReference>
<dbReference type="GO" id="GO:0005829">
    <property type="term" value="C:cytosol"/>
    <property type="evidence" value="ECO:0007669"/>
    <property type="project" value="Ensembl"/>
</dbReference>
<dbReference type="GO" id="GO:0005654">
    <property type="term" value="C:nucleoplasm"/>
    <property type="evidence" value="ECO:0007669"/>
    <property type="project" value="Ensembl"/>
</dbReference>
<dbReference type="GO" id="GO:0010387">
    <property type="term" value="P:COP9 signalosome assembly"/>
    <property type="evidence" value="ECO:0007669"/>
    <property type="project" value="InterPro"/>
</dbReference>
<dbReference type="GO" id="GO:0000338">
    <property type="term" value="P:protein deneddylation"/>
    <property type="evidence" value="ECO:0007669"/>
    <property type="project" value="Ensembl"/>
</dbReference>
<dbReference type="InterPro" id="IPR045237">
    <property type="entry name" value="COPS7/eIF3m"/>
</dbReference>
<dbReference type="InterPro" id="IPR041481">
    <property type="entry name" value="CSN7_helixI"/>
</dbReference>
<dbReference type="InterPro" id="IPR000717">
    <property type="entry name" value="PCI_dom"/>
</dbReference>
<dbReference type="PANTHER" id="PTHR15350">
    <property type="entry name" value="COP9 SIGNALOSOME COMPLEX SUBUNIT 7/DENDRITIC CELL PROTEIN GA17"/>
    <property type="match status" value="1"/>
</dbReference>
<dbReference type="PANTHER" id="PTHR15350:SF7">
    <property type="entry name" value="COP9 SIGNALOSOME COMPLEX SUBUNIT 7A"/>
    <property type="match status" value="1"/>
</dbReference>
<dbReference type="Pfam" id="PF22061">
    <property type="entry name" value="CSN7_HB_subdom"/>
    <property type="match status" value="1"/>
</dbReference>
<dbReference type="Pfam" id="PF18392">
    <property type="entry name" value="CSN7a_helixI"/>
    <property type="match status" value="1"/>
</dbReference>
<dbReference type="Pfam" id="PF01399">
    <property type="entry name" value="PCI"/>
    <property type="match status" value="1"/>
</dbReference>
<dbReference type="SMART" id="SM00088">
    <property type="entry name" value="PINT"/>
    <property type="match status" value="1"/>
</dbReference>
<dbReference type="PROSITE" id="PS50250">
    <property type="entry name" value="PCI"/>
    <property type="match status" value="1"/>
</dbReference>
<sequence length="275" mass="30277">MSAEVKVTGQNQEQFLLLAKSAKGAALATLIHQVLEAPGVYVFGELLDMPNVRELAESDFASTFRLLTVFAYGTYADYLAEARNLPPLTEAQKNKLRHLSVVTLAAKVKCIPYAVLLEALALRNVRQLEDLVIEAVYADVLRGSLDQRNQRLEVDYSIGRDIQRQDLSAIARTLQEWCVGCEVVLSGIEEQVSRANQHKEQQLGLKQQIESEVANLKKTIKVTTAAAAAATSQDPEQHLTELREPAPGTNQRQPSKKASKGKGLRGSAKIWSKSN</sequence>
<name>CSN7A_PONAB</name>
<proteinExistence type="evidence at transcript level"/>
<evidence type="ECO:0000250" key="1"/>
<evidence type="ECO:0000250" key="2">
    <source>
        <dbReference type="UniProtKB" id="Q9CZ04"/>
    </source>
</evidence>
<evidence type="ECO:0000250" key="3">
    <source>
        <dbReference type="UniProtKB" id="Q9UBW8"/>
    </source>
</evidence>
<evidence type="ECO:0000255" key="4"/>
<evidence type="ECO:0000255" key="5">
    <source>
        <dbReference type="PROSITE-ProRule" id="PRU01185"/>
    </source>
</evidence>
<evidence type="ECO:0000256" key="6">
    <source>
        <dbReference type="SAM" id="MobiDB-lite"/>
    </source>
</evidence>
<evidence type="ECO:0000305" key="7"/>